<reference key="1">
    <citation type="journal article" date="1997" name="Nature">
        <title>The nucleotide sequence of Saccharomyces cerevisiae chromosome V.</title>
        <authorList>
            <person name="Dietrich F.S."/>
            <person name="Mulligan J.T."/>
            <person name="Hennessy K.M."/>
            <person name="Yelton M.A."/>
            <person name="Allen E."/>
            <person name="Araujo R."/>
            <person name="Aviles E."/>
            <person name="Berno A."/>
            <person name="Brennan T."/>
            <person name="Carpenter J."/>
            <person name="Chen E."/>
            <person name="Cherry J.M."/>
            <person name="Chung E."/>
            <person name="Duncan M."/>
            <person name="Guzman E."/>
            <person name="Hartzell G."/>
            <person name="Hunicke-Smith S."/>
            <person name="Hyman R.W."/>
            <person name="Kayser A."/>
            <person name="Komp C."/>
            <person name="Lashkari D."/>
            <person name="Lew H."/>
            <person name="Lin D."/>
            <person name="Mosedale D."/>
            <person name="Nakahara K."/>
            <person name="Namath A."/>
            <person name="Norgren R."/>
            <person name="Oefner P."/>
            <person name="Oh C."/>
            <person name="Petel F.X."/>
            <person name="Roberts D."/>
            <person name="Sehl P."/>
            <person name="Schramm S."/>
            <person name="Shogren T."/>
            <person name="Smith V."/>
            <person name="Taylor P."/>
            <person name="Wei Y."/>
            <person name="Botstein D."/>
            <person name="Davis R.W."/>
        </authorList>
    </citation>
    <scope>NUCLEOTIDE SEQUENCE [LARGE SCALE GENOMIC DNA]</scope>
    <source>
        <strain>ATCC 204508 / S288c</strain>
    </source>
</reference>
<reference key="2">
    <citation type="journal article" date="2014" name="G3 (Bethesda)">
        <title>The reference genome sequence of Saccharomyces cerevisiae: Then and now.</title>
        <authorList>
            <person name="Engel S.R."/>
            <person name="Dietrich F.S."/>
            <person name="Fisk D.G."/>
            <person name="Binkley G."/>
            <person name="Balakrishnan R."/>
            <person name="Costanzo M.C."/>
            <person name="Dwight S.S."/>
            <person name="Hitz B.C."/>
            <person name="Karra K."/>
            <person name="Nash R.S."/>
            <person name="Weng S."/>
            <person name="Wong E.D."/>
            <person name="Lloyd P."/>
            <person name="Skrzypek M.S."/>
            <person name="Miyasato S.R."/>
            <person name="Simison M."/>
            <person name="Cherry J.M."/>
        </authorList>
    </citation>
    <scope>GENOME REANNOTATION</scope>
    <source>
        <strain>ATCC 204508 / S288c</strain>
    </source>
</reference>
<reference key="3">
    <citation type="journal article" date="2007" name="Genome Res.">
        <title>Approaching a complete repository of sequence-verified protein-encoding clones for Saccharomyces cerevisiae.</title>
        <authorList>
            <person name="Hu Y."/>
            <person name="Rolfs A."/>
            <person name="Bhullar B."/>
            <person name="Murthy T.V.S."/>
            <person name="Zhu C."/>
            <person name="Berger M.F."/>
            <person name="Camargo A.A."/>
            <person name="Kelley F."/>
            <person name="McCarron S."/>
            <person name="Jepson D."/>
            <person name="Richardson A."/>
            <person name="Raphael J."/>
            <person name="Moreira D."/>
            <person name="Taycher E."/>
            <person name="Zuo D."/>
            <person name="Mohr S."/>
            <person name="Kane M.F."/>
            <person name="Williamson J."/>
            <person name="Simpson A.J.G."/>
            <person name="Bulyk M.L."/>
            <person name="Harlow E."/>
            <person name="Marsischky G."/>
            <person name="Kolodner R.D."/>
            <person name="LaBaer J."/>
        </authorList>
    </citation>
    <scope>NUCLEOTIDE SEQUENCE [GENOMIC DNA]</scope>
    <source>
        <strain>ATCC 204508 / S288c</strain>
    </source>
</reference>
<reference key="4">
    <citation type="journal article" date="2007" name="Proc. Natl. Acad. Sci. U.S.A.">
        <title>High-density yeast-tiling array reveals previously undiscovered introns and extensive regulation of meiotic splicing.</title>
        <authorList>
            <person name="Juneau K."/>
            <person name="Palm C."/>
            <person name="Miranda M."/>
            <person name="Davis R.W."/>
        </authorList>
    </citation>
    <scope>NUCLEOTIDE SEQUENCE [MRNA] OF 1-88</scope>
    <source>
        <strain>ATCC 201390 / BY4743</strain>
    </source>
</reference>
<reference key="5">
    <citation type="journal article" date="1998" name="Yeast">
        <title>The list of cytoplasmic ribosomal proteins of Saccharomyces cerevisiae.</title>
        <authorList>
            <person name="Planta R.J."/>
            <person name="Mager W.H."/>
        </authorList>
    </citation>
    <scope>NOMENCLATURE</scope>
    <scope>SUBUNIT</scope>
</reference>
<reference key="6">
    <citation type="journal article" date="2000" name="Nature">
        <title>A comprehensive analysis of protein-protein interactions in Saccharomyces cerevisiae.</title>
        <authorList>
            <person name="Uetz P."/>
            <person name="Giot L."/>
            <person name="Cagney G."/>
            <person name="Mansfield T.A."/>
            <person name="Judson R.S."/>
            <person name="Knight J.R."/>
            <person name="Lockshon D."/>
            <person name="Narayan V."/>
            <person name="Srinivasan M."/>
            <person name="Pochart P."/>
            <person name="Qureshi-Emili A."/>
            <person name="Li Y."/>
            <person name="Godwin B."/>
            <person name="Conover D."/>
            <person name="Kalbfleisch T."/>
            <person name="Vijayadamodar G."/>
            <person name="Yang M."/>
            <person name="Johnston M."/>
            <person name="Fields S."/>
            <person name="Rothberg J.M."/>
        </authorList>
    </citation>
    <scope>INTERACTION WITH TSR2</scope>
</reference>
<reference key="7">
    <citation type="journal article" date="2003" name="Cell">
        <title>A panoramic view of yeast noncoding RNA processing.</title>
        <authorList>
            <person name="Peng W.-T."/>
            <person name="Robinson M.D."/>
            <person name="Mnaimneh S."/>
            <person name="Krogan N.J."/>
            <person name="Cagney G."/>
            <person name="Morris Q.D."/>
            <person name="Davierwala A.P."/>
            <person name="Grigull J."/>
            <person name="Yang X."/>
            <person name="Zhang W."/>
            <person name="Mitsakakis N."/>
            <person name="Ryan O.W."/>
            <person name="Datta N."/>
            <person name="Jojic V."/>
            <person name="Pal C."/>
            <person name="Canadien V."/>
            <person name="Richards D.P."/>
            <person name="Beattie B."/>
            <person name="Wu L.F."/>
            <person name="Altschuler S.J."/>
            <person name="Roweis S."/>
            <person name="Frey B.J."/>
            <person name="Emili A."/>
            <person name="Greenblatt J.F."/>
            <person name="Hughes T.R."/>
        </authorList>
    </citation>
    <scope>INTERACTION WITH TSR2</scope>
</reference>
<reference key="8">
    <citation type="journal article" date="2003" name="Nature">
        <title>Global analysis of protein localization in budding yeast.</title>
        <authorList>
            <person name="Huh W.-K."/>
            <person name="Falvo J.V."/>
            <person name="Gerke L.C."/>
            <person name="Carroll A.S."/>
            <person name="Howson R.W."/>
            <person name="Weissman J.S."/>
            <person name="O'Shea E.K."/>
        </authorList>
    </citation>
    <scope>SUBCELLULAR LOCATION [LARGE SCALE ANALYSIS]</scope>
</reference>
<reference key="9">
    <citation type="journal article" date="2003" name="Nature">
        <title>Global analysis of protein expression in yeast.</title>
        <authorList>
            <person name="Ghaemmaghami S."/>
            <person name="Huh W.-K."/>
            <person name="Bower K."/>
            <person name="Howson R.W."/>
            <person name="Belle A."/>
            <person name="Dephoure N."/>
            <person name="O'Shea E.K."/>
            <person name="Weissman J.S."/>
        </authorList>
    </citation>
    <scope>LEVEL OF PROTEIN EXPRESSION [LARGE SCALE ANALYSIS]</scope>
</reference>
<reference key="10">
    <citation type="journal article" date="2011" name="Science">
        <title>The structure of the eukaryotic ribosome at 3.0 A resolution.</title>
        <authorList>
            <person name="Ben-Shem A."/>
            <person name="Garreau de Loubresse N."/>
            <person name="Melnikov S."/>
            <person name="Jenner L."/>
            <person name="Yusupova G."/>
            <person name="Yusupov M."/>
        </authorList>
    </citation>
    <scope>SUBUNIT</scope>
    <scope>SUBCELLULAR LOCATION</scope>
</reference>
<reference key="11">
    <citation type="journal article" date="2014" name="Curr. Opin. Struct. Biol.">
        <title>A new system for naming ribosomal proteins.</title>
        <authorList>
            <person name="Ban N."/>
            <person name="Beckmann R."/>
            <person name="Cate J.H.D."/>
            <person name="Dinman J.D."/>
            <person name="Dragon F."/>
            <person name="Ellis S.R."/>
            <person name="Lafontaine D.L.J."/>
            <person name="Lindahl L."/>
            <person name="Liljas A."/>
            <person name="Lipton J.M."/>
            <person name="McAlear M.A."/>
            <person name="Moore P.B."/>
            <person name="Noller H.F."/>
            <person name="Ortega J."/>
            <person name="Panse V.G."/>
            <person name="Ramakrishnan V."/>
            <person name="Spahn C.M.T."/>
            <person name="Steitz T.A."/>
            <person name="Tchorzewski M."/>
            <person name="Tollervey D."/>
            <person name="Warren A.J."/>
            <person name="Williamson J.R."/>
            <person name="Wilson D."/>
            <person name="Yonath A."/>
            <person name="Yusupov M."/>
        </authorList>
    </citation>
    <scope>NOMENCLATURE</scope>
</reference>
<feature type="chain" id="PRO_0000204529" description="Small ribosomal subunit protein eS26B">
    <location>
        <begin position="1"/>
        <end position="119"/>
    </location>
</feature>
<feature type="region of interest" description="Disordered" evidence="1">
    <location>
        <begin position="1"/>
        <end position="20"/>
    </location>
</feature>
<feature type="region of interest" description="Disordered" evidence="1">
    <location>
        <begin position="88"/>
        <end position="119"/>
    </location>
</feature>
<feature type="sequence conflict" description="In Ref. 3; AAT92801." evidence="9" ref="3">
    <original>S</original>
    <variation>P</variation>
    <location>
        <position position="110"/>
    </location>
</feature>
<feature type="strand" evidence="12">
    <location>
        <begin position="8"/>
        <end position="10"/>
    </location>
</feature>
<feature type="strand" evidence="12">
    <location>
        <begin position="20"/>
        <end position="22"/>
    </location>
</feature>
<feature type="strand" evidence="12">
    <location>
        <begin position="24"/>
        <end position="26"/>
    </location>
</feature>
<feature type="strand" evidence="12">
    <location>
        <begin position="29"/>
        <end position="35"/>
    </location>
</feature>
<feature type="strand" evidence="12">
    <location>
        <begin position="37"/>
        <end position="45"/>
    </location>
</feature>
<feature type="turn" evidence="12">
    <location>
        <begin position="47"/>
        <end position="51"/>
    </location>
</feature>
<feature type="helix" evidence="12">
    <location>
        <begin position="52"/>
        <end position="55"/>
    </location>
</feature>
<feature type="strand" evidence="12">
    <location>
        <begin position="57"/>
        <end position="59"/>
    </location>
</feature>
<feature type="strand" evidence="12">
    <location>
        <begin position="66"/>
        <end position="72"/>
    </location>
</feature>
<feature type="helix" evidence="12">
    <location>
        <begin position="75"/>
        <end position="80"/>
    </location>
</feature>
<feature type="helix" evidence="12">
    <location>
        <begin position="91"/>
        <end position="93"/>
    </location>
</feature>
<dbReference type="EMBL" id="U18916">
    <property type="protein sequence ID" value="AAC03229.1"/>
    <property type="molecule type" value="Genomic_DNA"/>
</dbReference>
<dbReference type="EMBL" id="AY692782">
    <property type="protein sequence ID" value="AAT92801.1"/>
    <property type="molecule type" value="Genomic_DNA"/>
</dbReference>
<dbReference type="EMBL" id="EF123142">
    <property type="protein sequence ID" value="ABM97486.1"/>
    <property type="molecule type" value="mRNA"/>
</dbReference>
<dbReference type="EMBL" id="BK006939">
    <property type="protein sequence ID" value="DAA07791.1"/>
    <property type="molecule type" value="Genomic_DNA"/>
</dbReference>
<dbReference type="PIR" id="S50634">
    <property type="entry name" value="S50634"/>
</dbReference>
<dbReference type="RefSeq" id="NP_011057.1">
    <property type="nucleotide sequence ID" value="NM_001179021.1"/>
</dbReference>
<dbReference type="PDB" id="4U3M">
    <property type="method" value="X-ray"/>
    <property type="resolution" value="3.00 A"/>
    <property type="chains" value="D6/d6=2-98"/>
</dbReference>
<dbReference type="PDB" id="4U3N">
    <property type="method" value="X-ray"/>
    <property type="resolution" value="3.20 A"/>
    <property type="chains" value="D6/d6=2-98"/>
</dbReference>
<dbReference type="PDB" id="4U3U">
    <property type="method" value="X-ray"/>
    <property type="resolution" value="2.90 A"/>
    <property type="chains" value="D6/d6=2-98"/>
</dbReference>
<dbReference type="PDB" id="4U4N">
    <property type="method" value="X-ray"/>
    <property type="resolution" value="3.10 A"/>
    <property type="chains" value="D6/d6=2-98"/>
</dbReference>
<dbReference type="PDB" id="4U4O">
    <property type="method" value="X-ray"/>
    <property type="resolution" value="3.60 A"/>
    <property type="chains" value="D6/d6=2-98"/>
</dbReference>
<dbReference type="PDB" id="4U4Q">
    <property type="method" value="X-ray"/>
    <property type="resolution" value="3.00 A"/>
    <property type="chains" value="D6/d6=2-98"/>
</dbReference>
<dbReference type="PDB" id="4U4R">
    <property type="method" value="X-ray"/>
    <property type="resolution" value="2.80 A"/>
    <property type="chains" value="D6/d6=2-98"/>
</dbReference>
<dbReference type="PDB" id="4U4U">
    <property type="method" value="X-ray"/>
    <property type="resolution" value="3.00 A"/>
    <property type="chains" value="D6/d6=2-98"/>
</dbReference>
<dbReference type="PDB" id="4U4Y">
    <property type="method" value="X-ray"/>
    <property type="resolution" value="3.20 A"/>
    <property type="chains" value="D6/d6=2-98"/>
</dbReference>
<dbReference type="PDB" id="4U4Z">
    <property type="method" value="X-ray"/>
    <property type="resolution" value="3.10 A"/>
    <property type="chains" value="D6/d6=2-98"/>
</dbReference>
<dbReference type="PDB" id="4U50">
    <property type="method" value="X-ray"/>
    <property type="resolution" value="3.20 A"/>
    <property type="chains" value="D6/d6=2-98"/>
</dbReference>
<dbReference type="PDB" id="4U51">
    <property type="method" value="X-ray"/>
    <property type="resolution" value="3.20 A"/>
    <property type="chains" value="D6/d6=2-98"/>
</dbReference>
<dbReference type="PDB" id="4U52">
    <property type="method" value="X-ray"/>
    <property type="resolution" value="3.00 A"/>
    <property type="chains" value="D6/d6=2-98"/>
</dbReference>
<dbReference type="PDB" id="4U53">
    <property type="method" value="X-ray"/>
    <property type="resolution" value="3.30 A"/>
    <property type="chains" value="D6/d6=2-98"/>
</dbReference>
<dbReference type="PDB" id="4U55">
    <property type="method" value="X-ray"/>
    <property type="resolution" value="3.20 A"/>
    <property type="chains" value="D6/d6=2-98"/>
</dbReference>
<dbReference type="PDB" id="4U56">
    <property type="method" value="X-ray"/>
    <property type="resolution" value="3.45 A"/>
    <property type="chains" value="D6/d6=2-98"/>
</dbReference>
<dbReference type="PDB" id="4U6F">
    <property type="method" value="X-ray"/>
    <property type="resolution" value="3.10 A"/>
    <property type="chains" value="D6/d6=2-98"/>
</dbReference>
<dbReference type="PDB" id="5DAT">
    <property type="method" value="X-ray"/>
    <property type="resolution" value="3.15 A"/>
    <property type="chains" value="D6/d6=2-98"/>
</dbReference>
<dbReference type="PDB" id="5DC3">
    <property type="method" value="X-ray"/>
    <property type="resolution" value="3.25 A"/>
    <property type="chains" value="D6/d6=2-98"/>
</dbReference>
<dbReference type="PDB" id="5DGF">
    <property type="method" value="X-ray"/>
    <property type="resolution" value="3.30 A"/>
    <property type="chains" value="D6/d6=2-98"/>
</dbReference>
<dbReference type="PDB" id="5DGV">
    <property type="method" value="X-ray"/>
    <property type="resolution" value="3.10 A"/>
    <property type="chains" value="D6/d6=2-98"/>
</dbReference>
<dbReference type="PDB" id="5FCJ">
    <property type="method" value="X-ray"/>
    <property type="resolution" value="3.10 A"/>
    <property type="chains" value="D6/d6=2-98"/>
</dbReference>
<dbReference type="PDB" id="5I4L">
    <property type="method" value="X-ray"/>
    <property type="resolution" value="3.10 A"/>
    <property type="chains" value="D6/d6=2-98"/>
</dbReference>
<dbReference type="PDB" id="5LYB">
    <property type="method" value="X-ray"/>
    <property type="resolution" value="3.25 A"/>
    <property type="chains" value="D6/d6=2-98"/>
</dbReference>
<dbReference type="PDB" id="5M1J">
    <property type="method" value="EM"/>
    <property type="resolution" value="3.30 A"/>
    <property type="chains" value="a2=2-99"/>
</dbReference>
<dbReference type="PDB" id="5MEI">
    <property type="method" value="X-ray"/>
    <property type="resolution" value="3.50 A"/>
    <property type="chains" value="b/d6=2-98"/>
</dbReference>
<dbReference type="PDB" id="5NDG">
    <property type="method" value="X-ray"/>
    <property type="resolution" value="3.70 A"/>
    <property type="chains" value="D6/d6=2-98"/>
</dbReference>
<dbReference type="PDB" id="5NDV">
    <property type="method" value="X-ray"/>
    <property type="resolution" value="3.30 A"/>
    <property type="chains" value="D6/d6=2-98"/>
</dbReference>
<dbReference type="PDB" id="5NDW">
    <property type="method" value="X-ray"/>
    <property type="resolution" value="3.70 A"/>
    <property type="chains" value="D6/d6=2-98"/>
</dbReference>
<dbReference type="PDB" id="5OBM">
    <property type="method" value="X-ray"/>
    <property type="resolution" value="3.40 A"/>
    <property type="chains" value="D6/d6=2-98"/>
</dbReference>
<dbReference type="PDB" id="5ON6">
    <property type="method" value="X-ray"/>
    <property type="resolution" value="3.10 A"/>
    <property type="chains" value="b/d6=2-98"/>
</dbReference>
<dbReference type="PDB" id="5TBW">
    <property type="method" value="X-ray"/>
    <property type="resolution" value="3.00 A"/>
    <property type="chains" value="b/d6=2-98"/>
</dbReference>
<dbReference type="PDB" id="5TGA">
    <property type="method" value="X-ray"/>
    <property type="resolution" value="3.30 A"/>
    <property type="chains" value="D6/d6=2-98"/>
</dbReference>
<dbReference type="PDB" id="5TGM">
    <property type="method" value="X-ray"/>
    <property type="resolution" value="3.50 A"/>
    <property type="chains" value="D6/d6=2-98"/>
</dbReference>
<dbReference type="PDB" id="6GQ1">
    <property type="method" value="EM"/>
    <property type="resolution" value="4.40 A"/>
    <property type="chains" value="AQ=2-98"/>
</dbReference>
<dbReference type="PDB" id="6GQB">
    <property type="method" value="EM"/>
    <property type="resolution" value="3.90 A"/>
    <property type="chains" value="AQ=2-98"/>
</dbReference>
<dbReference type="PDB" id="6GQV">
    <property type="method" value="EM"/>
    <property type="resolution" value="4.00 A"/>
    <property type="chains" value="AQ=2-98"/>
</dbReference>
<dbReference type="PDB" id="6HHQ">
    <property type="method" value="X-ray"/>
    <property type="resolution" value="3.10 A"/>
    <property type="chains" value="b/d6=1-119"/>
</dbReference>
<dbReference type="PDB" id="6I7O">
    <property type="method" value="EM"/>
    <property type="resolution" value="5.30 A"/>
    <property type="chains" value="e/eb=2-98"/>
</dbReference>
<dbReference type="PDB" id="6Q8Y">
    <property type="method" value="EM"/>
    <property type="resolution" value="3.10 A"/>
    <property type="chains" value="e=2-98"/>
</dbReference>
<dbReference type="PDB" id="6S47">
    <property type="method" value="EM"/>
    <property type="resolution" value="3.28 A"/>
    <property type="chains" value="Bb=2-119"/>
</dbReference>
<dbReference type="PDB" id="6T4Q">
    <property type="method" value="EM"/>
    <property type="resolution" value="2.60 A"/>
    <property type="chains" value="Sa=2-98"/>
</dbReference>
<dbReference type="PDB" id="6TB3">
    <property type="method" value="EM"/>
    <property type="resolution" value="2.80 A"/>
    <property type="chains" value="e=2-98"/>
</dbReference>
<dbReference type="PDB" id="6TNU">
    <property type="method" value="EM"/>
    <property type="resolution" value="3.10 A"/>
    <property type="chains" value="e=2-98"/>
</dbReference>
<dbReference type="PDB" id="6WOO">
    <property type="method" value="EM"/>
    <property type="resolution" value="2.90 A"/>
    <property type="chains" value="aa=2-98"/>
</dbReference>
<dbReference type="PDB" id="6Z6J">
    <property type="method" value="EM"/>
    <property type="resolution" value="3.40 A"/>
    <property type="chains" value="Sa=1-119"/>
</dbReference>
<dbReference type="PDB" id="6Z6K">
    <property type="method" value="EM"/>
    <property type="resolution" value="3.40 A"/>
    <property type="chains" value="Sa=1-119"/>
</dbReference>
<dbReference type="PDB" id="6ZVI">
    <property type="method" value="EM"/>
    <property type="resolution" value="3.00 A"/>
    <property type="chains" value="K=2-98"/>
</dbReference>
<dbReference type="PDB" id="7A1G">
    <property type="method" value="EM"/>
    <property type="resolution" value="3.00 A"/>
    <property type="chains" value="e=2-98"/>
</dbReference>
<dbReference type="PDB" id="7B7D">
    <property type="method" value="EM"/>
    <property type="resolution" value="3.30 A"/>
    <property type="chains" value="e=2-98"/>
</dbReference>
<dbReference type="PDB" id="7MPI">
    <property type="method" value="EM"/>
    <property type="resolution" value="3.05 A"/>
    <property type="chains" value="Ba=2-98"/>
</dbReference>
<dbReference type="PDB" id="7N8B">
    <property type="method" value="EM"/>
    <property type="resolution" value="3.05 A"/>
    <property type="chains" value="Ba=2-98"/>
</dbReference>
<dbReference type="PDB" id="7NRC">
    <property type="method" value="EM"/>
    <property type="resolution" value="3.90 A"/>
    <property type="chains" value="Se=2-98"/>
</dbReference>
<dbReference type="PDB" id="7NRD">
    <property type="method" value="EM"/>
    <property type="resolution" value="4.36 A"/>
    <property type="chains" value="Se=2-98"/>
</dbReference>
<dbReference type="PDB" id="7ZPQ">
    <property type="method" value="EM"/>
    <property type="resolution" value="3.47 A"/>
    <property type="chains" value="Aa=2-98"/>
</dbReference>
<dbReference type="PDB" id="7ZRS">
    <property type="method" value="EM"/>
    <property type="resolution" value="4.80 A"/>
    <property type="chains" value="Aa=2-98"/>
</dbReference>
<dbReference type="PDB" id="7ZUX">
    <property type="method" value="EM"/>
    <property type="resolution" value="2.50 A"/>
    <property type="chains" value="Da=2-98"/>
</dbReference>
<dbReference type="PDB" id="8BN3">
    <property type="method" value="EM"/>
    <property type="resolution" value="2.40 A"/>
    <property type="chains" value="D6=2-98"/>
</dbReference>
<dbReference type="PDB" id="8BQX">
    <property type="method" value="EM"/>
    <property type="resolution" value="3.80 A"/>
    <property type="chains" value="e=2-98"/>
</dbReference>
<dbReference type="PDB" id="8K2D">
    <property type="method" value="EM"/>
    <property type="resolution" value="3.20 A"/>
    <property type="chains" value="Sa=1-119"/>
</dbReference>
<dbReference type="PDB" id="8K82">
    <property type="method" value="EM"/>
    <property type="resolution" value="3.00 A"/>
    <property type="chains" value="Sa=1-119"/>
</dbReference>
<dbReference type="PDB" id="8P4V">
    <property type="method" value="X-ray"/>
    <property type="resolution" value="3.16 A"/>
    <property type="chains" value="b/d6=1-119"/>
</dbReference>
<dbReference type="PDB" id="8P9A">
    <property type="method" value="X-ray"/>
    <property type="resolution" value="2.90 A"/>
    <property type="chains" value="b/d6=1-119"/>
</dbReference>
<dbReference type="PDB" id="8T2X">
    <property type="method" value="EM"/>
    <property type="resolution" value="2.46 A"/>
    <property type="chains" value="Ba=1-119"/>
</dbReference>
<dbReference type="PDB" id="8T2Y">
    <property type="method" value="EM"/>
    <property type="resolution" value="2.20 A"/>
    <property type="chains" value="Ba=1-119"/>
</dbReference>
<dbReference type="PDB" id="8T2Z">
    <property type="method" value="EM"/>
    <property type="resolution" value="2.40 A"/>
    <property type="chains" value="Ba=1-119"/>
</dbReference>
<dbReference type="PDB" id="8T30">
    <property type="method" value="EM"/>
    <property type="resolution" value="2.88 A"/>
    <property type="chains" value="Ba=1-119"/>
</dbReference>
<dbReference type="PDB" id="8T3A">
    <property type="method" value="EM"/>
    <property type="resolution" value="2.86 A"/>
    <property type="chains" value="Ba=1-119"/>
</dbReference>
<dbReference type="PDB" id="8T3B">
    <property type="method" value="EM"/>
    <property type="resolution" value="3.08 A"/>
    <property type="chains" value="Ba=1-119"/>
</dbReference>
<dbReference type="PDB" id="8T3C">
    <property type="method" value="EM"/>
    <property type="resolution" value="3.86 A"/>
    <property type="chains" value="Ba=1-119"/>
</dbReference>
<dbReference type="PDB" id="8T3D">
    <property type="method" value="EM"/>
    <property type="resolution" value="2.95 A"/>
    <property type="chains" value="Ba=1-119"/>
</dbReference>
<dbReference type="PDB" id="8T3E">
    <property type="method" value="EM"/>
    <property type="resolution" value="3.04 A"/>
    <property type="chains" value="Ba=1-119"/>
</dbReference>
<dbReference type="PDB" id="8T3F">
    <property type="method" value="EM"/>
    <property type="resolution" value="3.09 A"/>
    <property type="chains" value="Ba=1-119"/>
</dbReference>
<dbReference type="PDB" id="8UT0">
    <property type="method" value="EM"/>
    <property type="resolution" value="3.22 A"/>
    <property type="chains" value="Se=2-98"/>
</dbReference>
<dbReference type="PDB" id="8Y0U">
    <property type="method" value="EM"/>
    <property type="resolution" value="3.59 A"/>
    <property type="chains" value="Sa=1-119"/>
</dbReference>
<dbReference type="PDBsum" id="4U3M"/>
<dbReference type="PDBsum" id="4U3N"/>
<dbReference type="PDBsum" id="4U3U"/>
<dbReference type="PDBsum" id="4U4N"/>
<dbReference type="PDBsum" id="4U4O"/>
<dbReference type="PDBsum" id="4U4Q"/>
<dbReference type="PDBsum" id="4U4R"/>
<dbReference type="PDBsum" id="4U4U"/>
<dbReference type="PDBsum" id="4U4Y"/>
<dbReference type="PDBsum" id="4U4Z"/>
<dbReference type="PDBsum" id="4U50"/>
<dbReference type="PDBsum" id="4U51"/>
<dbReference type="PDBsum" id="4U52"/>
<dbReference type="PDBsum" id="4U53"/>
<dbReference type="PDBsum" id="4U55"/>
<dbReference type="PDBsum" id="4U56"/>
<dbReference type="PDBsum" id="4U6F"/>
<dbReference type="PDBsum" id="5DAT"/>
<dbReference type="PDBsum" id="5DC3"/>
<dbReference type="PDBsum" id="5DGF"/>
<dbReference type="PDBsum" id="5DGV"/>
<dbReference type="PDBsum" id="5FCJ"/>
<dbReference type="PDBsum" id="5I4L"/>
<dbReference type="PDBsum" id="5LYB"/>
<dbReference type="PDBsum" id="5M1J"/>
<dbReference type="PDBsum" id="5MEI"/>
<dbReference type="PDBsum" id="5NDG"/>
<dbReference type="PDBsum" id="5NDV"/>
<dbReference type="PDBsum" id="5NDW"/>
<dbReference type="PDBsum" id="5OBM"/>
<dbReference type="PDBsum" id="5ON6"/>
<dbReference type="PDBsum" id="5TBW"/>
<dbReference type="PDBsum" id="5TGA"/>
<dbReference type="PDBsum" id="5TGM"/>
<dbReference type="PDBsum" id="6GQ1"/>
<dbReference type="PDBsum" id="6GQB"/>
<dbReference type="PDBsum" id="6GQV"/>
<dbReference type="PDBsum" id="6HHQ"/>
<dbReference type="PDBsum" id="6I7O"/>
<dbReference type="PDBsum" id="6Q8Y"/>
<dbReference type="PDBsum" id="6S47"/>
<dbReference type="PDBsum" id="6T4Q"/>
<dbReference type="PDBsum" id="6TB3"/>
<dbReference type="PDBsum" id="6TNU"/>
<dbReference type="PDBsum" id="6WOO"/>
<dbReference type="PDBsum" id="6Z6J"/>
<dbReference type="PDBsum" id="6Z6K"/>
<dbReference type="PDBsum" id="6ZVI"/>
<dbReference type="PDBsum" id="7A1G"/>
<dbReference type="PDBsum" id="7B7D"/>
<dbReference type="PDBsum" id="7MPI"/>
<dbReference type="PDBsum" id="7N8B"/>
<dbReference type="PDBsum" id="7NRC"/>
<dbReference type="PDBsum" id="7NRD"/>
<dbReference type="PDBsum" id="7ZPQ"/>
<dbReference type="PDBsum" id="7ZRS"/>
<dbReference type="PDBsum" id="7ZUX"/>
<dbReference type="PDBsum" id="8BN3"/>
<dbReference type="PDBsum" id="8BQX"/>
<dbReference type="PDBsum" id="8K2D"/>
<dbReference type="PDBsum" id="8K82"/>
<dbReference type="PDBsum" id="8P4V"/>
<dbReference type="PDBsum" id="8P9A"/>
<dbReference type="PDBsum" id="8T2X"/>
<dbReference type="PDBsum" id="8T2Y"/>
<dbReference type="PDBsum" id="8T2Z"/>
<dbReference type="PDBsum" id="8T30"/>
<dbReference type="PDBsum" id="8T3A"/>
<dbReference type="PDBsum" id="8T3B"/>
<dbReference type="PDBsum" id="8T3C"/>
<dbReference type="PDBsum" id="8T3D"/>
<dbReference type="PDBsum" id="8T3E"/>
<dbReference type="PDBsum" id="8T3F"/>
<dbReference type="PDBsum" id="8UT0"/>
<dbReference type="PDBsum" id="8Y0U"/>
<dbReference type="EMDB" id="EMD-0047"/>
<dbReference type="EMDB" id="EMD-0048"/>
<dbReference type="EMDB" id="EMD-0049"/>
<dbReference type="EMDB" id="EMD-10098"/>
<dbReference type="EMDB" id="EMD-10377"/>
<dbReference type="EMDB" id="EMD-10397"/>
<dbReference type="EMDB" id="EMD-10431"/>
<dbReference type="EMDB" id="EMD-10537"/>
<dbReference type="EMDB" id="EMD-11096"/>
<dbReference type="EMDB" id="EMD-11097"/>
<dbReference type="EMDB" id="EMD-11608"/>
<dbReference type="EMDB" id="EMD-12081"/>
<dbReference type="EMDB" id="EMD-12534"/>
<dbReference type="EMDB" id="EMD-12535"/>
<dbReference type="EMDB" id="EMD-14979"/>
<dbReference type="EMDB" id="EMD-16191"/>
<dbReference type="EMDB" id="EMD-21859"/>
<dbReference type="EMDB" id="EMD-23934"/>
<dbReference type="EMDB" id="EMD-24235"/>
<dbReference type="EMDB" id="EMD-36839"/>
<dbReference type="EMDB" id="EMD-36945"/>
<dbReference type="EMDB" id="EMD-4140"/>
<dbReference type="EMDB" id="EMD-4427"/>
<dbReference type="EMDB" id="EMD-4474"/>
<dbReference type="SMR" id="P39939"/>
<dbReference type="BioGRID" id="36875">
    <property type="interactions" value="228"/>
</dbReference>
<dbReference type="ComplexPortal" id="CPX-1599">
    <property type="entry name" value="40S cytosolic small ribosomal subunit"/>
</dbReference>
<dbReference type="DIP" id="DIP-1395N"/>
<dbReference type="FunCoup" id="P39939">
    <property type="interactions" value="981"/>
</dbReference>
<dbReference type="IntAct" id="P39939">
    <property type="interactions" value="77"/>
</dbReference>
<dbReference type="MINT" id="P39939"/>
<dbReference type="STRING" id="4932.YER131W"/>
<dbReference type="CarbonylDB" id="P39939"/>
<dbReference type="iPTMnet" id="P39939"/>
<dbReference type="PaxDb" id="4932-YER131W"/>
<dbReference type="PeptideAtlas" id="P39939"/>
<dbReference type="EnsemblFungi" id="YER131W_mRNA">
    <property type="protein sequence ID" value="YER131W"/>
    <property type="gene ID" value="YER131W"/>
</dbReference>
<dbReference type="GeneID" id="856868"/>
<dbReference type="KEGG" id="sce:YER131W"/>
<dbReference type="AGR" id="SGD:S000000933"/>
<dbReference type="SGD" id="S000000933">
    <property type="gene designation" value="RPS26B"/>
</dbReference>
<dbReference type="VEuPathDB" id="FungiDB:YER131W"/>
<dbReference type="eggNOG" id="KOG1768">
    <property type="taxonomic scope" value="Eukaryota"/>
</dbReference>
<dbReference type="GeneTree" id="ENSGT00390000002517"/>
<dbReference type="HOGENOM" id="CLU_129451_2_0_1"/>
<dbReference type="InParanoid" id="P39939"/>
<dbReference type="OMA" id="KCYCVSC"/>
<dbReference type="OrthoDB" id="10262653at2759"/>
<dbReference type="BioCyc" id="YEAST:G3O-30294-MONOMER"/>
<dbReference type="BioGRID-ORCS" id="856868">
    <property type="hits" value="2 hits in 10 CRISPR screens"/>
</dbReference>
<dbReference type="PRO" id="PR:P39939"/>
<dbReference type="Proteomes" id="UP000002311">
    <property type="component" value="Chromosome V"/>
</dbReference>
<dbReference type="RNAct" id="P39939">
    <property type="molecule type" value="protein"/>
</dbReference>
<dbReference type="GO" id="GO:0030686">
    <property type="term" value="C:90S preribosome"/>
    <property type="evidence" value="ECO:0000353"/>
    <property type="project" value="SGD"/>
</dbReference>
<dbReference type="GO" id="GO:0005829">
    <property type="term" value="C:cytosol"/>
    <property type="evidence" value="ECO:0000304"/>
    <property type="project" value="Reactome"/>
</dbReference>
<dbReference type="GO" id="GO:0022627">
    <property type="term" value="C:cytosolic small ribosomal subunit"/>
    <property type="evidence" value="ECO:0000318"/>
    <property type="project" value="GO_Central"/>
</dbReference>
<dbReference type="GO" id="GO:0003729">
    <property type="term" value="F:mRNA binding"/>
    <property type="evidence" value="ECO:0000318"/>
    <property type="project" value="GO_Central"/>
</dbReference>
<dbReference type="GO" id="GO:0003735">
    <property type="term" value="F:structural constituent of ribosome"/>
    <property type="evidence" value="ECO:0000318"/>
    <property type="project" value="GO_Central"/>
</dbReference>
<dbReference type="GO" id="GO:0002181">
    <property type="term" value="P:cytoplasmic translation"/>
    <property type="evidence" value="ECO:0000303"/>
    <property type="project" value="SGD"/>
</dbReference>
<dbReference type="GO" id="GO:0000463">
    <property type="term" value="P:maturation of LSU-rRNA from tricistronic rRNA transcript (SSU-rRNA, 5.8S rRNA, LSU-rRNA)"/>
    <property type="evidence" value="ECO:0000315"/>
    <property type="project" value="SGD"/>
</dbReference>
<dbReference type="GO" id="GO:0000054">
    <property type="term" value="P:ribosomal subunit export from nucleus"/>
    <property type="evidence" value="ECO:0000316"/>
    <property type="project" value="SGD"/>
</dbReference>
<dbReference type="GO" id="GO:0042255">
    <property type="term" value="P:ribosome assembly"/>
    <property type="evidence" value="ECO:0000315"/>
    <property type="project" value="SGD"/>
</dbReference>
<dbReference type="FunFam" id="3.30.1740.20:FF:000001">
    <property type="entry name" value="40S ribosomal protein S26"/>
    <property type="match status" value="1"/>
</dbReference>
<dbReference type="Gene3D" id="3.30.1740.20">
    <property type="entry name" value="Ribosomal protein S26e"/>
    <property type="match status" value="1"/>
</dbReference>
<dbReference type="InterPro" id="IPR000892">
    <property type="entry name" value="Ribosomal_eS26"/>
</dbReference>
<dbReference type="InterPro" id="IPR047864">
    <property type="entry name" value="Ribosomal_eS26_CS"/>
</dbReference>
<dbReference type="InterPro" id="IPR038551">
    <property type="entry name" value="Ribosomal_eS26_sf"/>
</dbReference>
<dbReference type="PANTHER" id="PTHR12538">
    <property type="entry name" value="40S RIBOSOMAL PROTEIN S26"/>
    <property type="match status" value="1"/>
</dbReference>
<dbReference type="PANTHER" id="PTHR12538:SF0">
    <property type="entry name" value="40S RIBOSOMAL PROTEIN S26"/>
    <property type="match status" value="1"/>
</dbReference>
<dbReference type="Pfam" id="PF01283">
    <property type="entry name" value="Ribosomal_S26e"/>
    <property type="match status" value="1"/>
</dbReference>
<dbReference type="PROSITE" id="PS00733">
    <property type="entry name" value="RIBOSOMAL_S26E"/>
    <property type="match status" value="1"/>
</dbReference>
<evidence type="ECO:0000256" key="1">
    <source>
        <dbReference type="SAM" id="MobiDB-lite"/>
    </source>
</evidence>
<evidence type="ECO:0000269" key="2">
    <source>
    </source>
</evidence>
<evidence type="ECO:0000269" key="3">
    <source>
    </source>
</evidence>
<evidence type="ECO:0000269" key="4">
    <source>
    </source>
</evidence>
<evidence type="ECO:0000269" key="5">
    <source>
    </source>
</evidence>
<evidence type="ECO:0000269" key="6">
    <source>
    </source>
</evidence>
<evidence type="ECO:0000303" key="7">
    <source>
    </source>
</evidence>
<evidence type="ECO:0000303" key="8">
    <source>
    </source>
</evidence>
<evidence type="ECO:0000305" key="9"/>
<evidence type="ECO:0000305" key="10">
    <source>
    </source>
</evidence>
<evidence type="ECO:0000305" key="11">
    <source>
    </source>
</evidence>
<evidence type="ECO:0007829" key="12">
    <source>
        <dbReference type="PDB" id="6ZVI"/>
    </source>
</evidence>
<name>RS26B_YEAST</name>
<comment type="function">
    <text evidence="10">Component of the ribosome, a large ribonucleoprotein complex responsible for the synthesis of proteins in the cell. The small ribosomal subunit (SSU) binds messenger RNAs (mRNAs) and translates the encoded message by selecting cognate aminoacyl-transfer RNA (tRNA) molecules. The large subunit (LSU) contains the ribosomal catalytic site termed the peptidyl transferase center (PTC), which catalyzes the formation of peptide bonds, thereby polymerizing the amino acids delivered by tRNAs into a polypeptide chain. The nascent polypeptides leave the ribosome through a tunnel in the LSU and interact with protein factors that function in enzymatic processing, targeting, and the membrane insertion of nascent chains at the exit of the ribosomal tunnel.</text>
</comment>
<comment type="subunit">
    <text evidence="2 3 6 11">Component of the small ribosomal subunit (SSU). Mature yeast ribosomes consist of a small (40S) and a large (60S) subunit. The 40S small subunit contains 1 molecule of ribosomal RNA (18S rRNA) and 33 different proteins (encoded by 57 genes). The large 60S subunit contains 3 rRNA molecules (25S, 5.8S and 5S rRNA) and 46 different proteins (encoded by 81 genes). eS26 interacts with eS1 forming part of the mRNA exit tunnel (PubMed:22096102, PubMed:9559554). eS26 interacts with TSR2 (PubMed:10688190, PubMed:12837249).</text>
</comment>
<comment type="interaction">
    <interactant intactId="EBI-14584">
        <id>P39939</id>
    </interactant>
    <interactant intactId="EBI-31165">
        <id>Q06672</id>
        <label>TSR2</label>
    </interactant>
    <organismsDiffer>false</organismsDiffer>
    <experiments>2</experiments>
</comment>
<comment type="subcellular location">
    <subcellularLocation>
        <location evidence="4 6">Cytoplasm</location>
    </subcellularLocation>
</comment>
<comment type="miscellaneous">
    <text evidence="5">Present with 503000 molecules/cell in log phase SD medium.</text>
</comment>
<comment type="miscellaneous">
    <text evidence="9">There are 2 genes for eS26 in yeast.</text>
</comment>
<comment type="similarity">
    <text evidence="9">Belongs to the eukaryotic ribosomal protein eS26 family.</text>
</comment>
<organism>
    <name type="scientific">Saccharomyces cerevisiae (strain ATCC 204508 / S288c)</name>
    <name type="common">Baker's yeast</name>
    <dbReference type="NCBI Taxonomy" id="559292"/>
    <lineage>
        <taxon>Eukaryota</taxon>
        <taxon>Fungi</taxon>
        <taxon>Dikarya</taxon>
        <taxon>Ascomycota</taxon>
        <taxon>Saccharomycotina</taxon>
        <taxon>Saccharomycetes</taxon>
        <taxon>Saccharomycetales</taxon>
        <taxon>Saccharomycetaceae</taxon>
        <taxon>Saccharomyces</taxon>
    </lineage>
</organism>
<accession>P39939</accession>
<accession>A2TBN5</accession>
<accession>D3DM37</accession>
<accession>Q6B2E8</accession>
<proteinExistence type="evidence at protein level"/>
<gene>
    <name evidence="8" type="primary">RPS26B</name>
    <name type="ordered locus">YER131W</name>
</gene>
<keyword id="KW-0002">3D-structure</keyword>
<keyword id="KW-0963">Cytoplasm</keyword>
<keyword id="KW-1185">Reference proteome</keyword>
<keyword id="KW-0687">Ribonucleoprotein</keyword>
<keyword id="KW-0689">Ribosomal protein</keyword>
<protein>
    <recommendedName>
        <fullName evidence="7">Small ribosomal subunit protein eS26B</fullName>
    </recommendedName>
    <alternativeName>
        <fullName evidence="8">40S ribosomal protein S26-B</fullName>
    </alternativeName>
</protein>
<sequence length="119" mass="13447">MPKKRASNGRNKKGRGHVKPVRCVNCSKSIPKDKAIKRMAIRNIVEAAAVRDLSEASVYPEYALPKTYNKLHYCVSCAIHARIVRVRSREDRKNRAPPQRPRFNRDNKVSPAAAAKKAL</sequence>